<accession>P0CG55</accession>
<accession>O46543</accession>
<accession>Q6Q310</accession>
<name>UBB_SHEEP</name>
<gene>
    <name type="primary">UBB</name>
</gene>
<reference key="1">
    <citation type="journal article" date="1998" name="J. Immunol.">
        <title>Ubiquitination and dimerization of complement receptor type 2 on sheep B cells.</title>
        <authorList>
            <person name="Hein W.R."/>
            <person name="Dudler L."/>
            <person name="Marston W.L."/>
            <person name="Landsverk T."/>
            <person name="Young A.J."/>
            <person name="Avila D."/>
        </authorList>
    </citation>
    <scope>NUCLEOTIDE SEQUENCE [MRNA]</scope>
    <source>
        <strain>White alpine</strain>
    </source>
</reference>
<protein>
    <recommendedName>
        <fullName>Polyubiquitin-B</fullName>
    </recommendedName>
    <component>
        <recommendedName>
            <fullName>Ubiquitin-related</fullName>
        </recommendedName>
    </component>
    <component>
        <recommendedName>
            <fullName>Ubiquitin</fullName>
        </recommendedName>
    </component>
</protein>
<evidence type="ECO:0000250" key="1"/>
<evidence type="ECO:0000250" key="2">
    <source>
        <dbReference type="UniProtKB" id="P0CG47"/>
    </source>
</evidence>
<evidence type="ECO:0000250" key="3">
    <source>
        <dbReference type="UniProtKB" id="P0CG51"/>
    </source>
</evidence>
<evidence type="ECO:0000255" key="4">
    <source>
        <dbReference type="PROSITE-ProRule" id="PRU00214"/>
    </source>
</evidence>
<evidence type="ECO:0000305" key="5"/>
<dbReference type="EMBL" id="AF038129">
    <property type="protein sequence ID" value="AAB92373.1"/>
    <property type="molecule type" value="mRNA"/>
</dbReference>
<dbReference type="RefSeq" id="NP_001009202.1">
    <property type="nucleotide sequence ID" value="NM_001009202.1"/>
</dbReference>
<dbReference type="SMR" id="P0CG55"/>
<dbReference type="STRING" id="9940.ENSOARP00000019508"/>
<dbReference type="PaxDb" id="9940-ENSOARP00000019508"/>
<dbReference type="GeneID" id="443016"/>
<dbReference type="KEGG" id="oas:443016"/>
<dbReference type="CTD" id="7314"/>
<dbReference type="eggNOG" id="KOG0001">
    <property type="taxonomic scope" value="Eukaryota"/>
</dbReference>
<dbReference type="OrthoDB" id="428577at2759"/>
<dbReference type="Proteomes" id="UP000002356">
    <property type="component" value="Unplaced"/>
</dbReference>
<dbReference type="GO" id="GO:0005741">
    <property type="term" value="C:mitochondrial outer membrane"/>
    <property type="evidence" value="ECO:0007669"/>
    <property type="project" value="UniProtKB-SubCell"/>
</dbReference>
<dbReference type="GO" id="GO:0005634">
    <property type="term" value="C:nucleus"/>
    <property type="evidence" value="ECO:0007669"/>
    <property type="project" value="UniProtKB-SubCell"/>
</dbReference>
<dbReference type="CDD" id="cd01803">
    <property type="entry name" value="Ubl_ubiquitin"/>
    <property type="match status" value="4"/>
</dbReference>
<dbReference type="FunFam" id="3.10.20.90:FF:000158">
    <property type="entry name" value="Polyubiquitin 5"/>
    <property type="match status" value="4"/>
</dbReference>
<dbReference type="Gene3D" id="3.10.20.90">
    <property type="entry name" value="Phosphatidylinositol 3-kinase Catalytic Subunit, Chain A, domain 1"/>
    <property type="match status" value="4"/>
</dbReference>
<dbReference type="InterPro" id="IPR000626">
    <property type="entry name" value="Ubiquitin-like_dom"/>
</dbReference>
<dbReference type="InterPro" id="IPR029071">
    <property type="entry name" value="Ubiquitin-like_domsf"/>
</dbReference>
<dbReference type="InterPro" id="IPR019954">
    <property type="entry name" value="Ubiquitin_CS"/>
</dbReference>
<dbReference type="InterPro" id="IPR019956">
    <property type="entry name" value="Ubiquitin_dom"/>
</dbReference>
<dbReference type="InterPro" id="IPR050158">
    <property type="entry name" value="Ubiquitin_ubiquitin-like"/>
</dbReference>
<dbReference type="PANTHER" id="PTHR10666">
    <property type="entry name" value="UBIQUITIN"/>
    <property type="match status" value="1"/>
</dbReference>
<dbReference type="Pfam" id="PF00240">
    <property type="entry name" value="ubiquitin"/>
    <property type="match status" value="4"/>
</dbReference>
<dbReference type="PRINTS" id="PR00348">
    <property type="entry name" value="UBIQUITIN"/>
</dbReference>
<dbReference type="SMART" id="SM00213">
    <property type="entry name" value="UBQ"/>
    <property type="match status" value="4"/>
</dbReference>
<dbReference type="SUPFAM" id="SSF54236">
    <property type="entry name" value="Ubiquitin-like"/>
    <property type="match status" value="4"/>
</dbReference>
<dbReference type="PROSITE" id="PS00299">
    <property type="entry name" value="UBIQUITIN_1"/>
    <property type="match status" value="4"/>
</dbReference>
<dbReference type="PROSITE" id="PS50053">
    <property type="entry name" value="UBIQUITIN_2"/>
    <property type="match status" value="4"/>
</dbReference>
<feature type="chain" id="PRO_0000114807" description="Ubiquitin-related">
    <location>
        <begin position="1"/>
        <end position="76"/>
    </location>
</feature>
<feature type="chain" id="PRO_0000396242" description="Ubiquitin">
    <location>
        <begin position="77"/>
        <end position="152"/>
    </location>
</feature>
<feature type="chain" id="PRO_0000396243" description="Ubiquitin">
    <location>
        <begin position="153"/>
        <end position="228"/>
    </location>
</feature>
<feature type="chain" id="PRO_0000396244" description="Ubiquitin">
    <location>
        <begin position="229"/>
        <end position="304"/>
    </location>
</feature>
<feature type="propeptide" id="PRO_0000396245">
    <location>
        <position position="305"/>
    </location>
</feature>
<feature type="domain" description="Ubiquitin-like 1" evidence="4">
    <location>
        <begin position="1"/>
        <end position="76"/>
    </location>
</feature>
<feature type="domain" description="Ubiquitin-like 2" evidence="4">
    <location>
        <begin position="77"/>
        <end position="152"/>
    </location>
</feature>
<feature type="domain" description="Ubiquitin-like 3" evidence="4">
    <location>
        <begin position="153"/>
        <end position="228"/>
    </location>
</feature>
<feature type="domain" description="Ubiquitin-like 4" evidence="4">
    <location>
        <begin position="229"/>
        <end position="304"/>
    </location>
</feature>
<feature type="site" description="Interacts with activating enzyme">
    <location>
        <position position="54"/>
    </location>
</feature>
<feature type="site" description="Essential for function">
    <location>
        <position position="68"/>
    </location>
</feature>
<feature type="site" description="Interacts with activating enzyme">
    <location>
        <position position="72"/>
    </location>
</feature>
<feature type="modified residue" description="Phosphoserine; by PINK1" evidence="2">
    <location>
        <position position="65"/>
    </location>
</feature>
<feature type="modified residue" description="ADP-ribosylglycine" evidence="2">
    <location>
        <position position="76"/>
    </location>
</feature>
<feature type="modified residue" description="Phosphoserine" evidence="2">
    <location>
        <position position="141"/>
    </location>
</feature>
<feature type="cross-link" description="Glycyl lysine isopeptide (Lys-Gly) (interchain with G-Cter in ubiquitin)" evidence="3">
    <location>
        <position position="48"/>
    </location>
</feature>
<feature type="cross-link" description="Glycyl lysine isopeptide (Gly-Lys) (interchain with K-? in acceptor proteins)" evidence="4">
    <location>
        <position position="76"/>
    </location>
</feature>
<feature type="cross-link" description="Glycyl lysine isopeptide (Lys-Gly) (interchain with G-Cter in ubiquitin)" evidence="2">
    <location>
        <position position="82"/>
    </location>
</feature>
<feature type="cross-link" description="Glycyl lysine isopeptide (Lys-Gly) (interchain with G-Cter in ubiquitin)" evidence="2">
    <location>
        <position position="87"/>
    </location>
</feature>
<feature type="cross-link" description="Glycyl lysine isopeptide (Lys-Gly) (interchain with G-Cter in ubiquitin)" evidence="2">
    <location>
        <position position="103"/>
    </location>
</feature>
<feature type="cross-link" description="Glycyl lysine isopeptide (Lys-Gly) (interchain with G-Cter in ubiquitin)" evidence="2">
    <location>
        <position position="105"/>
    </location>
</feature>
<feature type="cross-link" description="Glycyl lysine isopeptide (Lys-Gly) (interchain with G-Cter in ubiquitin)" evidence="2">
    <location>
        <position position="124"/>
    </location>
</feature>
<feature type="cross-link" description="Glycyl lysine isopeptide (Lys-Gly) (interchain with G-Cter in ubiquitin)" evidence="2">
    <location>
        <position position="139"/>
    </location>
</feature>
<proteinExistence type="evidence at transcript level"/>
<organism>
    <name type="scientific">Ovis aries</name>
    <name type="common">Sheep</name>
    <dbReference type="NCBI Taxonomy" id="9940"/>
    <lineage>
        <taxon>Eukaryota</taxon>
        <taxon>Metazoa</taxon>
        <taxon>Chordata</taxon>
        <taxon>Craniata</taxon>
        <taxon>Vertebrata</taxon>
        <taxon>Euteleostomi</taxon>
        <taxon>Mammalia</taxon>
        <taxon>Eutheria</taxon>
        <taxon>Laurasiatheria</taxon>
        <taxon>Artiodactyla</taxon>
        <taxon>Ruminantia</taxon>
        <taxon>Pecora</taxon>
        <taxon>Bovidae</taxon>
        <taxon>Caprinae</taxon>
        <taxon>Ovis</taxon>
    </lineage>
</organism>
<sequence length="305" mass="34327">MQIFVKTLTGKTITLEVEPSDTIENVKAKIQDKEGIPPDQQRLIFAGKQLEDGRTLSDYNIQKESTLHLVLRMRGGMQIFVKTLTGKTITLEVEPSDTIENVKAKIQDKEGIPPDQQRLIFAGKQLEDGRTLSDYNIQKESTLHLVLRLRGGMQIFVKTLTGKTITLEVEPSDTIENVKAKIQDKEGIPPDQQRLIFAGKQLEDGRTLSDYNIQKESTLHLVLRLRGGMQIFVKTLTGKTITLEVEPSDTIENVKAKIQDKEGIPPDQQRLIFAGKQLEDGRTLSDYNIQKESTLHLVLRLRGGC</sequence>
<keyword id="KW-0013">ADP-ribosylation</keyword>
<keyword id="KW-0963">Cytoplasm</keyword>
<keyword id="KW-1017">Isopeptide bond</keyword>
<keyword id="KW-0472">Membrane</keyword>
<keyword id="KW-0496">Mitochondrion</keyword>
<keyword id="KW-1000">Mitochondrion outer membrane</keyword>
<keyword id="KW-0539">Nucleus</keyword>
<keyword id="KW-0597">Phosphoprotein</keyword>
<keyword id="KW-1185">Reference proteome</keyword>
<keyword id="KW-0677">Repeat</keyword>
<keyword id="KW-0832">Ubl conjugation</keyword>
<comment type="function">
    <molecule>Ubiquitin</molecule>
    <text evidence="2">Exists either covalently attached to another protein, or free (unanchored). When covalently bound, it is conjugated to target proteins via an isopeptide bond either as a monomer (monoubiquitin), a polymer linked via different Lys residues of the ubiquitin (polyubiquitin chains) or a linear polymer linked via the initiator Met of the ubiquitin (linear polyubiquitin chains). Polyubiquitin chains, when attached to a target protein, have different functions depending on the Lys residue of the ubiquitin that is linked: Lys-6-linked may be involved in DNA repair; Lys-11-linked is involved in ERAD (endoplasmic reticulum-associated degradation) and in cell-cycle regulation; Lys-29-linked is involved in proteotoxic stress response and cell cycle; Lys-33-linked is involved in kinase modification; Lys-48-linked is involved in protein degradation via the proteasome; Lys-63-linked is involved in endocytosis, DNA-damage responses as well as in signaling processes leading to activation of the transcription factor NF-kappa-B. Linear polymer chains formed via attachment by the initiator Met lead to cell signaling. Ubiquitin is usually conjugated to Lys residues of target proteins, however, in rare cases, conjugation to Cys or Ser residues has been observed. When polyubiquitin is free (unanchored-polyubiquitin), it also has distinct roles, such as in activation of protein kinases, and in signaling.</text>
</comment>
<comment type="subunit">
    <text evidence="2">Interacts with SKP1-KMD2A and SKP1-KMD2B complexes.</text>
</comment>
<comment type="subcellular location">
    <molecule>Ubiquitin</molecule>
    <subcellularLocation>
        <location evidence="1">Cytoplasm</location>
    </subcellularLocation>
    <subcellularLocation>
        <location evidence="1">Nucleus</location>
    </subcellularLocation>
    <subcellularLocation>
        <location evidence="2">Mitochondrion outer membrane</location>
        <topology evidence="2">Peripheral membrane protein</topology>
    </subcellularLocation>
</comment>
<comment type="PTM">
    <molecule>Ubiquitin</molecule>
    <text evidence="2">Phosphorylated at Ser-65 by PINK1 during mitophagy. Phosphorylated ubiquitin specifically binds and activates parkin (PRKN), triggering mitophagy. Phosphorylation does not affect E1-mediated E2 charging of ubiquitin but affects discharging of E2 enzymes to form polyubiquitin chains. It also affects deubiquitination by deubiquitinase enzymes such as USP30.</text>
</comment>
<comment type="PTM">
    <molecule>Ubiquitin</molecule>
    <text evidence="2">Mono-ADP-ribosylated at the C-terminus by PARP9, a component of the PPAR9-DTX3L complex. ADP-ribosylation requires processing by E1 and E2 enzymes and prevents ubiquitin conjugation to substrates such as histones.</text>
</comment>
<comment type="miscellaneous">
    <text>Ubiquitin is encoded by 4 different genes. Uba52 and Rps27a genes code for a single copy of ubiquitin fused to the ribosomal proteins eL40 and eS31, respectively. UBB and UBC genes code for a polyubiquitin precursor with exact head to tail repeats, the number of repeats differ between species and strains.</text>
</comment>
<comment type="miscellaneous">
    <text>For the sake of clarity sequence features are annotated only for the first chain, and are not repeated for each of the following chains.</text>
</comment>
<comment type="similarity">
    <text evidence="5">Belongs to the ubiquitin family.</text>
</comment>